<reference key="1">
    <citation type="submission" date="2009-06" db="EMBL/GenBank/DDBJ databases">
        <title>Complete sequence of Desulfovibrio salexigens DSM 2638.</title>
        <authorList>
            <consortium name="US DOE Joint Genome Institute"/>
            <person name="Lucas S."/>
            <person name="Copeland A."/>
            <person name="Lapidus A."/>
            <person name="Glavina del Rio T."/>
            <person name="Tice H."/>
            <person name="Bruce D."/>
            <person name="Goodwin L."/>
            <person name="Pitluck S."/>
            <person name="Munk A.C."/>
            <person name="Brettin T."/>
            <person name="Detter J.C."/>
            <person name="Han C."/>
            <person name="Tapia R."/>
            <person name="Larimer F."/>
            <person name="Land M."/>
            <person name="Hauser L."/>
            <person name="Kyrpides N."/>
            <person name="Anderson I."/>
            <person name="Wall J.D."/>
            <person name="Arkin A.P."/>
            <person name="Dehal P."/>
            <person name="Chivian D."/>
            <person name="Giles B."/>
            <person name="Hazen T.C."/>
        </authorList>
    </citation>
    <scope>NUCLEOTIDE SEQUENCE [LARGE SCALE GENOMIC DNA]</scope>
    <source>
        <strain>ATCC 14822 / DSM 2638 / NCIMB 8403 / VKM B-1763</strain>
    </source>
</reference>
<evidence type="ECO:0000255" key="1">
    <source>
        <dbReference type="HAMAP-Rule" id="MF_00120"/>
    </source>
</evidence>
<evidence type="ECO:0000256" key="2">
    <source>
        <dbReference type="SAM" id="MobiDB-lite"/>
    </source>
</evidence>
<comment type="function">
    <text evidence="1">Allows the formation of correctly charged Gln-tRNA(Gln) through the transamidation of misacylated Glu-tRNA(Gln) in organisms which lack glutaminyl-tRNA synthetase. The reaction takes place in the presence of glutamine and ATP through an activated gamma-phospho-Glu-tRNA(Gln).</text>
</comment>
<comment type="catalytic activity">
    <reaction evidence="1">
        <text>L-glutamyl-tRNA(Gln) + L-glutamine + ATP + H2O = L-glutaminyl-tRNA(Gln) + L-glutamate + ADP + phosphate + H(+)</text>
        <dbReference type="Rhea" id="RHEA:17521"/>
        <dbReference type="Rhea" id="RHEA-COMP:9681"/>
        <dbReference type="Rhea" id="RHEA-COMP:9684"/>
        <dbReference type="ChEBI" id="CHEBI:15377"/>
        <dbReference type="ChEBI" id="CHEBI:15378"/>
        <dbReference type="ChEBI" id="CHEBI:29985"/>
        <dbReference type="ChEBI" id="CHEBI:30616"/>
        <dbReference type="ChEBI" id="CHEBI:43474"/>
        <dbReference type="ChEBI" id="CHEBI:58359"/>
        <dbReference type="ChEBI" id="CHEBI:78520"/>
        <dbReference type="ChEBI" id="CHEBI:78521"/>
        <dbReference type="ChEBI" id="CHEBI:456216"/>
        <dbReference type="EC" id="6.3.5.7"/>
    </reaction>
</comment>
<comment type="subunit">
    <text evidence="1">Heterotrimer of A, B and C subunits.</text>
</comment>
<comment type="similarity">
    <text evidence="1">Belongs to the amidase family. GatA subfamily.</text>
</comment>
<feature type="chain" id="PRO_1000203031" description="Glutamyl-tRNA(Gln) amidotransferase subunit A">
    <location>
        <begin position="1"/>
        <end position="487"/>
    </location>
</feature>
<feature type="region of interest" description="Disordered" evidence="2">
    <location>
        <begin position="135"/>
        <end position="155"/>
    </location>
</feature>
<feature type="compositionally biased region" description="Polar residues" evidence="2">
    <location>
        <begin position="135"/>
        <end position="144"/>
    </location>
</feature>
<feature type="active site" description="Charge relay system" evidence="1">
    <location>
        <position position="78"/>
    </location>
</feature>
<feature type="active site" description="Charge relay system" evidence="1">
    <location>
        <position position="153"/>
    </location>
</feature>
<feature type="active site" description="Acyl-ester intermediate" evidence="1">
    <location>
        <position position="177"/>
    </location>
</feature>
<sequence length="487" mass="52280">MSALIEKSLTEIHAMLMTKEVTATEAVKACLEQIAKSEPETKALLHICNDEALKQAEEMDAAGPDASKPLWGVPVVIKDALATNGIPTTAGSKILEGFTPFYDSTAVAKLKEAGAIIVGKANMDEFAMGSTTENSAYQTTTNPWDASRVPGGSSGGSGATVAAGQCYAALGTDTGGSIRLPASFCGCVGVKPTYGRVSRYGMIAYGSSLDQIGPMTRTVEDAARVLNVIGGHDQRDSTSAEQPMEDFVAALEERKDLSGLTIGLPEEYWGEGLSKEVSEACRAAIAKAEELGAKTVPVKLSMTEYAIATYYIIAMAEASSNLSRFDGVRYGHRTEDPKELAELYTKSRTEAFGDEVQRRIIIGTYVLSAGYYDAYYRKAAQIRRLLREDFNKAFESCDIIASPACPTTAFPVGELTSDPLQMYLQDIFTISLNLVGMPGMSLPVAFGKETNMPVGLQFMAPAFDEKTMLQAAHVLEKNLPELPKVKL</sequence>
<protein>
    <recommendedName>
        <fullName evidence="1">Glutamyl-tRNA(Gln) amidotransferase subunit A</fullName>
        <shortName evidence="1">Glu-ADT subunit A</shortName>
        <ecNumber evidence="1">6.3.5.7</ecNumber>
    </recommendedName>
</protein>
<name>GATA_MARSD</name>
<dbReference type="EC" id="6.3.5.7" evidence="1"/>
<dbReference type="EMBL" id="CP001649">
    <property type="protein sequence ID" value="ACS79625.1"/>
    <property type="molecule type" value="Genomic_DNA"/>
</dbReference>
<dbReference type="RefSeq" id="WP_015851443.1">
    <property type="nucleotide sequence ID" value="NC_012881.1"/>
</dbReference>
<dbReference type="SMR" id="C6BSE9"/>
<dbReference type="STRING" id="526222.Desal_1563"/>
<dbReference type="KEGG" id="dsa:Desal_1563"/>
<dbReference type="eggNOG" id="COG0154">
    <property type="taxonomic scope" value="Bacteria"/>
</dbReference>
<dbReference type="HOGENOM" id="CLU_009600_0_3_7"/>
<dbReference type="OrthoDB" id="9811471at2"/>
<dbReference type="Proteomes" id="UP000002601">
    <property type="component" value="Chromosome"/>
</dbReference>
<dbReference type="GO" id="GO:0030956">
    <property type="term" value="C:glutamyl-tRNA(Gln) amidotransferase complex"/>
    <property type="evidence" value="ECO:0007669"/>
    <property type="project" value="InterPro"/>
</dbReference>
<dbReference type="GO" id="GO:0005524">
    <property type="term" value="F:ATP binding"/>
    <property type="evidence" value="ECO:0007669"/>
    <property type="project" value="UniProtKB-KW"/>
</dbReference>
<dbReference type="GO" id="GO:0050567">
    <property type="term" value="F:glutaminyl-tRNA synthase (glutamine-hydrolyzing) activity"/>
    <property type="evidence" value="ECO:0007669"/>
    <property type="project" value="UniProtKB-UniRule"/>
</dbReference>
<dbReference type="GO" id="GO:0006412">
    <property type="term" value="P:translation"/>
    <property type="evidence" value="ECO:0007669"/>
    <property type="project" value="UniProtKB-UniRule"/>
</dbReference>
<dbReference type="Gene3D" id="3.90.1300.10">
    <property type="entry name" value="Amidase signature (AS) domain"/>
    <property type="match status" value="1"/>
</dbReference>
<dbReference type="HAMAP" id="MF_00120">
    <property type="entry name" value="GatA"/>
    <property type="match status" value="1"/>
</dbReference>
<dbReference type="InterPro" id="IPR000120">
    <property type="entry name" value="Amidase"/>
</dbReference>
<dbReference type="InterPro" id="IPR020556">
    <property type="entry name" value="Amidase_CS"/>
</dbReference>
<dbReference type="InterPro" id="IPR023631">
    <property type="entry name" value="Amidase_dom"/>
</dbReference>
<dbReference type="InterPro" id="IPR036928">
    <property type="entry name" value="AS_sf"/>
</dbReference>
<dbReference type="InterPro" id="IPR004412">
    <property type="entry name" value="GatA"/>
</dbReference>
<dbReference type="NCBIfam" id="TIGR00132">
    <property type="entry name" value="gatA"/>
    <property type="match status" value="1"/>
</dbReference>
<dbReference type="PANTHER" id="PTHR11895:SF151">
    <property type="entry name" value="GLUTAMYL-TRNA(GLN) AMIDOTRANSFERASE SUBUNIT A"/>
    <property type="match status" value="1"/>
</dbReference>
<dbReference type="PANTHER" id="PTHR11895">
    <property type="entry name" value="TRANSAMIDASE"/>
    <property type="match status" value="1"/>
</dbReference>
<dbReference type="Pfam" id="PF01425">
    <property type="entry name" value="Amidase"/>
    <property type="match status" value="1"/>
</dbReference>
<dbReference type="PIRSF" id="PIRSF001221">
    <property type="entry name" value="Amidase_fungi"/>
    <property type="match status" value="1"/>
</dbReference>
<dbReference type="SUPFAM" id="SSF75304">
    <property type="entry name" value="Amidase signature (AS) enzymes"/>
    <property type="match status" value="1"/>
</dbReference>
<dbReference type="PROSITE" id="PS00571">
    <property type="entry name" value="AMIDASES"/>
    <property type="match status" value="1"/>
</dbReference>
<keyword id="KW-0067">ATP-binding</keyword>
<keyword id="KW-0436">Ligase</keyword>
<keyword id="KW-0547">Nucleotide-binding</keyword>
<keyword id="KW-0648">Protein biosynthesis</keyword>
<keyword id="KW-1185">Reference proteome</keyword>
<proteinExistence type="inferred from homology"/>
<accession>C6BSE9</accession>
<organism>
    <name type="scientific">Maridesulfovibrio salexigens (strain ATCC 14822 / DSM 2638 / NCIMB 8403 / VKM B-1763)</name>
    <name type="common">Desulfovibrio salexigens</name>
    <dbReference type="NCBI Taxonomy" id="526222"/>
    <lineage>
        <taxon>Bacteria</taxon>
        <taxon>Pseudomonadati</taxon>
        <taxon>Thermodesulfobacteriota</taxon>
        <taxon>Desulfovibrionia</taxon>
        <taxon>Desulfovibrionales</taxon>
        <taxon>Desulfovibrionaceae</taxon>
        <taxon>Maridesulfovibrio</taxon>
    </lineage>
</organism>
<gene>
    <name evidence="1" type="primary">gatA</name>
    <name type="ordered locus">Desal_1563</name>
</gene>